<name>LECC_POLMI</name>
<sequence>MDYEILFSDETMNYADAGTYCQSRGMALVSSAMRDSTMVKAILAFTEVKGHDYWVGADNLQDGAYNFLWNDGVSLPTDSDLWSPNEPSNPQSWQLCVQIWSKYNLLDDVGCGGARRVICEKELDD</sequence>
<feature type="chain" id="PRO_0000046646" description="Lectin">
    <location>
        <begin position="1"/>
        <end position="125"/>
    </location>
</feature>
<feature type="domain" description="C-type lectin" evidence="1">
    <location>
        <begin position="1"/>
        <end position="120"/>
    </location>
</feature>
<feature type="disulfide bond">
    <location>
        <begin position="21"/>
        <end position="119"/>
    </location>
</feature>
<feature type="disulfide bond">
    <location>
        <begin position="96"/>
        <end position="111"/>
    </location>
</feature>
<feature type="strand" evidence="2">
    <location>
        <begin position="3"/>
        <end position="12"/>
    </location>
</feature>
<feature type="helix" evidence="2">
    <location>
        <begin position="14"/>
        <end position="22"/>
    </location>
</feature>
<feature type="turn" evidence="2">
    <location>
        <begin position="23"/>
        <end position="25"/>
    </location>
</feature>
<feature type="strand" evidence="2">
    <location>
        <begin position="27"/>
        <end position="29"/>
    </location>
</feature>
<feature type="helix" evidence="2">
    <location>
        <begin position="31"/>
        <end position="34"/>
    </location>
</feature>
<feature type="helix" evidence="2">
    <location>
        <begin position="36"/>
        <end position="49"/>
    </location>
</feature>
<feature type="strand" evidence="2">
    <location>
        <begin position="53"/>
        <end position="59"/>
    </location>
</feature>
<feature type="turn" evidence="2">
    <location>
        <begin position="60"/>
        <end position="62"/>
    </location>
</feature>
<feature type="strand" evidence="2">
    <location>
        <begin position="96"/>
        <end position="99"/>
    </location>
</feature>
<feature type="turn" evidence="2">
    <location>
        <begin position="101"/>
        <end position="103"/>
    </location>
</feature>
<feature type="strand" evidence="2">
    <location>
        <begin position="104"/>
        <end position="109"/>
    </location>
</feature>
<feature type="strand" evidence="2">
    <location>
        <begin position="115"/>
        <end position="122"/>
    </location>
</feature>
<dbReference type="PIR" id="A35003">
    <property type="entry name" value="A35003"/>
</dbReference>
<dbReference type="PDB" id="1BYF">
    <property type="method" value="X-ray"/>
    <property type="resolution" value="2.00 A"/>
    <property type="chains" value="A/B=1-125"/>
</dbReference>
<dbReference type="PDB" id="1TLG">
    <property type="method" value="X-ray"/>
    <property type="resolution" value="2.20 A"/>
    <property type="chains" value="A/B=1-125"/>
</dbReference>
<dbReference type="PDBsum" id="1BYF"/>
<dbReference type="PDBsum" id="1TLG"/>
<dbReference type="SMR" id="P16108"/>
<dbReference type="UniLectin" id="P16108"/>
<dbReference type="EvolutionaryTrace" id="P16108"/>
<dbReference type="GO" id="GO:0030246">
    <property type="term" value="F:carbohydrate binding"/>
    <property type="evidence" value="ECO:0007669"/>
    <property type="project" value="UniProtKB-KW"/>
</dbReference>
<dbReference type="CDD" id="cd03601">
    <property type="entry name" value="CLECT_TC14_like"/>
    <property type="match status" value="1"/>
</dbReference>
<dbReference type="Gene3D" id="3.10.100.10">
    <property type="entry name" value="Mannose-Binding Protein A, subunit A"/>
    <property type="match status" value="1"/>
</dbReference>
<dbReference type="InterPro" id="IPR001304">
    <property type="entry name" value="C-type_lectin-like"/>
</dbReference>
<dbReference type="InterPro" id="IPR016186">
    <property type="entry name" value="C-type_lectin-like/link_sf"/>
</dbReference>
<dbReference type="InterPro" id="IPR018378">
    <property type="entry name" value="C-type_lectin_CS"/>
</dbReference>
<dbReference type="InterPro" id="IPR050801">
    <property type="entry name" value="Ca-Dep_Lectins_ImmuneDev"/>
</dbReference>
<dbReference type="InterPro" id="IPR016187">
    <property type="entry name" value="CTDL_fold"/>
</dbReference>
<dbReference type="InterPro" id="IPR034008">
    <property type="entry name" value="TC14-like_CTLD"/>
</dbReference>
<dbReference type="PANTHER" id="PTHR22801:SF63">
    <property type="entry name" value="C-TYPE LECTIN DOMAIN-CONTAINING PROTEIN"/>
    <property type="match status" value="1"/>
</dbReference>
<dbReference type="PANTHER" id="PTHR22801">
    <property type="entry name" value="LITHOSTATHINE"/>
    <property type="match status" value="1"/>
</dbReference>
<dbReference type="Pfam" id="PF00059">
    <property type="entry name" value="Lectin_C"/>
    <property type="match status" value="1"/>
</dbReference>
<dbReference type="SMART" id="SM00034">
    <property type="entry name" value="CLECT"/>
    <property type="match status" value="1"/>
</dbReference>
<dbReference type="SUPFAM" id="SSF56436">
    <property type="entry name" value="C-type lectin-like"/>
    <property type="match status" value="1"/>
</dbReference>
<dbReference type="PROSITE" id="PS00615">
    <property type="entry name" value="C_TYPE_LECTIN_1"/>
    <property type="match status" value="1"/>
</dbReference>
<dbReference type="PROSITE" id="PS50041">
    <property type="entry name" value="C_TYPE_LECTIN_2"/>
    <property type="match status" value="1"/>
</dbReference>
<keyword id="KW-0002">3D-structure</keyword>
<keyword id="KW-0106">Calcium</keyword>
<keyword id="KW-0903">Direct protein sequencing</keyword>
<keyword id="KW-1015">Disulfide bond</keyword>
<keyword id="KW-0430">Lectin</keyword>
<comment type="function">
    <text>Role in the defense system of the organism against microorganisms. This calcium-binding lectin binds galactose.</text>
</comment>
<comment type="subunit">
    <text>Homodimer.</text>
</comment>
<organism>
    <name type="scientific">Polyandrocarpa misakiensis</name>
    <name type="common">Tunicate</name>
    <dbReference type="NCBI Taxonomy" id="7723"/>
    <lineage>
        <taxon>Eukaryota</taxon>
        <taxon>Metazoa</taxon>
        <taxon>Chordata</taxon>
        <taxon>Tunicata</taxon>
        <taxon>Ascidiacea</taxon>
        <taxon>Stolidobranchia</taxon>
        <taxon>Styelidae</taxon>
        <taxon>Polyandrocarpa</taxon>
    </lineage>
</organism>
<accession>P16108</accession>
<reference key="1">
    <citation type="journal article" date="1990" name="J. Biol. Chem.">
        <title>A calcium-dependent galactose-binding lectin from the tunicate Polyandrocarpa misakiensis. Isolation, characterization, and amino acid sequence.</title>
        <authorList>
            <person name="Suzuki T."/>
            <person name="Takagi T."/>
            <person name="Furukohri T."/>
            <person name="Kawamura K."/>
            <person name="Nakauchi M."/>
        </authorList>
    </citation>
    <scope>PROTEIN SEQUENCE</scope>
</reference>
<reference key="2">
    <citation type="journal article" date="1999" name="J. Mol. Biol.">
        <title>The structure of a tunicate C-type lectin from Polyandrocarpa misakiensis complexed with D-galactose.</title>
        <authorList>
            <person name="Poget S.F."/>
            <person name="Legge G.B."/>
            <person name="Proctor M.R."/>
            <person name="Butler P.J."/>
            <person name="Bycroft M."/>
            <person name="Williams R.L."/>
        </authorList>
    </citation>
    <scope>X-RAY CRYSTALLOGRAPHY (2.0 ANGSTROMS)</scope>
</reference>
<protein>
    <recommendedName>
        <fullName>Lectin</fullName>
    </recommendedName>
</protein>
<evidence type="ECO:0000255" key="1">
    <source>
        <dbReference type="PROSITE-ProRule" id="PRU00040"/>
    </source>
</evidence>
<evidence type="ECO:0007829" key="2">
    <source>
        <dbReference type="PDB" id="1BYF"/>
    </source>
</evidence>
<proteinExistence type="evidence at protein level"/>